<protein>
    <recommendedName>
        <fullName evidence="1">HPr kinase/phosphorylase</fullName>
        <shortName evidence="1">HPrK/P</shortName>
        <ecNumber evidence="1">2.7.11.-</ecNumber>
        <ecNumber evidence="1">2.7.4.-</ecNumber>
    </recommendedName>
    <alternativeName>
        <fullName evidence="1">HPr(Ser) kinase/phosphorylase</fullName>
    </alternativeName>
</protein>
<evidence type="ECO:0000255" key="1">
    <source>
        <dbReference type="HAMAP-Rule" id="MF_01249"/>
    </source>
</evidence>
<comment type="function">
    <text evidence="1">Catalyzes the ATP- as well as the pyrophosphate-dependent phosphorylation of a specific serine residue in HPr, a phosphocarrier protein of the phosphoenolpyruvate-dependent sugar phosphotransferase system (PTS). HprK/P also catalyzes the pyrophosphate-producing, inorganic phosphate-dependent dephosphorylation (phosphorolysis) of seryl-phosphorylated HPr (P-Ser-HPr). The two antagonistic activities of HprK/P are regulated by several intracellular metabolites, which change their concentration in response to the absence or presence of rapidly metabolisable carbon sources (glucose, fructose, etc.) in the growth medium. Also phosphorylates/dephosphorylates the HPr-like catabolite repression protein crh on a specific serine residue. Therefore, by controlling the phosphorylation state of HPr and crh, HPrK/P is a sensor enzyme that plays a major role in the regulation of carbon metabolism and sugar transport: it mediates carbon catabolite repression (CCR), and regulates PTS-catalyzed carbohydrate uptake and inducer exclusion.</text>
</comment>
<comment type="catalytic activity">
    <reaction evidence="1">
        <text>[HPr protein]-L-serine + ATP = [HPr protein]-O-phospho-L-serine + ADP + H(+)</text>
        <dbReference type="Rhea" id="RHEA:46600"/>
        <dbReference type="Rhea" id="RHEA-COMP:11602"/>
        <dbReference type="Rhea" id="RHEA-COMP:11603"/>
        <dbReference type="ChEBI" id="CHEBI:15378"/>
        <dbReference type="ChEBI" id="CHEBI:29999"/>
        <dbReference type="ChEBI" id="CHEBI:30616"/>
        <dbReference type="ChEBI" id="CHEBI:83421"/>
        <dbReference type="ChEBI" id="CHEBI:456216"/>
    </reaction>
</comment>
<comment type="catalytic activity">
    <reaction evidence="1">
        <text>[HPr protein]-O-phospho-L-serine + phosphate + H(+) = [HPr protein]-L-serine + diphosphate</text>
        <dbReference type="Rhea" id="RHEA:46604"/>
        <dbReference type="Rhea" id="RHEA-COMP:11602"/>
        <dbReference type="Rhea" id="RHEA-COMP:11603"/>
        <dbReference type="ChEBI" id="CHEBI:15378"/>
        <dbReference type="ChEBI" id="CHEBI:29999"/>
        <dbReference type="ChEBI" id="CHEBI:33019"/>
        <dbReference type="ChEBI" id="CHEBI:43474"/>
        <dbReference type="ChEBI" id="CHEBI:83421"/>
    </reaction>
</comment>
<comment type="cofactor">
    <cofactor evidence="1">
        <name>Mg(2+)</name>
        <dbReference type="ChEBI" id="CHEBI:18420"/>
    </cofactor>
</comment>
<comment type="subunit">
    <text evidence="1">Homohexamer.</text>
</comment>
<comment type="domain">
    <text evidence="1">The Walker A ATP-binding motif also binds Pi and PPi.</text>
</comment>
<comment type="miscellaneous">
    <text evidence="1">Both phosphorylation and phosphorolysis are carried out by the same active site and suggest a common mechanism for both reactions.</text>
</comment>
<comment type="similarity">
    <text evidence="1">Belongs to the HPrK/P family.</text>
</comment>
<dbReference type="EC" id="2.7.11.-" evidence="1"/>
<dbReference type="EC" id="2.7.4.-" evidence="1"/>
<dbReference type="EMBL" id="CP000764">
    <property type="protein sequence ID" value="ABS23903.1"/>
    <property type="molecule type" value="Genomic_DNA"/>
</dbReference>
<dbReference type="RefSeq" id="WP_012096160.1">
    <property type="nucleotide sequence ID" value="NC_009674.1"/>
</dbReference>
<dbReference type="SMR" id="A7GUU5"/>
<dbReference type="STRING" id="315749.Bcer98_3706"/>
<dbReference type="GeneID" id="33898953"/>
<dbReference type="KEGG" id="bcy:Bcer98_3706"/>
<dbReference type="eggNOG" id="COG1493">
    <property type="taxonomic scope" value="Bacteria"/>
</dbReference>
<dbReference type="HOGENOM" id="CLU_052030_0_1_9"/>
<dbReference type="OrthoDB" id="9778803at2"/>
<dbReference type="Proteomes" id="UP000002300">
    <property type="component" value="Chromosome"/>
</dbReference>
<dbReference type="GO" id="GO:0005524">
    <property type="term" value="F:ATP binding"/>
    <property type="evidence" value="ECO:0007669"/>
    <property type="project" value="UniProtKB-UniRule"/>
</dbReference>
<dbReference type="GO" id="GO:0000287">
    <property type="term" value="F:magnesium ion binding"/>
    <property type="evidence" value="ECO:0007669"/>
    <property type="project" value="UniProtKB-UniRule"/>
</dbReference>
<dbReference type="GO" id="GO:0000155">
    <property type="term" value="F:phosphorelay sensor kinase activity"/>
    <property type="evidence" value="ECO:0007669"/>
    <property type="project" value="InterPro"/>
</dbReference>
<dbReference type="GO" id="GO:0004674">
    <property type="term" value="F:protein serine/threonine kinase activity"/>
    <property type="evidence" value="ECO:0007669"/>
    <property type="project" value="UniProtKB-KW"/>
</dbReference>
<dbReference type="GO" id="GO:0004712">
    <property type="term" value="F:protein serine/threonine/tyrosine kinase activity"/>
    <property type="evidence" value="ECO:0007669"/>
    <property type="project" value="UniProtKB-UniRule"/>
</dbReference>
<dbReference type="GO" id="GO:0006109">
    <property type="term" value="P:regulation of carbohydrate metabolic process"/>
    <property type="evidence" value="ECO:0007669"/>
    <property type="project" value="UniProtKB-UniRule"/>
</dbReference>
<dbReference type="CDD" id="cd01918">
    <property type="entry name" value="HprK_C"/>
    <property type="match status" value="1"/>
</dbReference>
<dbReference type="FunFam" id="3.40.1390.20:FF:000002">
    <property type="entry name" value="HPr kinase/phosphorylase"/>
    <property type="match status" value="1"/>
</dbReference>
<dbReference type="FunFam" id="3.40.50.300:FF:000174">
    <property type="entry name" value="HPr kinase/phosphorylase"/>
    <property type="match status" value="1"/>
</dbReference>
<dbReference type="Gene3D" id="3.40.1390.20">
    <property type="entry name" value="HprK N-terminal domain-like"/>
    <property type="match status" value="1"/>
</dbReference>
<dbReference type="Gene3D" id="3.40.50.300">
    <property type="entry name" value="P-loop containing nucleotide triphosphate hydrolases"/>
    <property type="match status" value="1"/>
</dbReference>
<dbReference type="HAMAP" id="MF_01249">
    <property type="entry name" value="HPr_kinase"/>
    <property type="match status" value="1"/>
</dbReference>
<dbReference type="InterPro" id="IPR003755">
    <property type="entry name" value="HPr(Ser)_kin/Pase"/>
</dbReference>
<dbReference type="InterPro" id="IPR011104">
    <property type="entry name" value="Hpr_kin/Pase_C"/>
</dbReference>
<dbReference type="InterPro" id="IPR011126">
    <property type="entry name" value="Hpr_kin/Pase_Hpr_N"/>
</dbReference>
<dbReference type="InterPro" id="IPR027417">
    <property type="entry name" value="P-loop_NTPase"/>
</dbReference>
<dbReference type="InterPro" id="IPR028979">
    <property type="entry name" value="Ser_kin/Pase_Hpr-like_N_sf"/>
</dbReference>
<dbReference type="NCBIfam" id="TIGR00679">
    <property type="entry name" value="hpr-ser"/>
    <property type="match status" value="1"/>
</dbReference>
<dbReference type="PANTHER" id="PTHR30305:SF1">
    <property type="entry name" value="HPR KINASE_PHOSPHORYLASE"/>
    <property type="match status" value="1"/>
</dbReference>
<dbReference type="PANTHER" id="PTHR30305">
    <property type="entry name" value="PROTEIN YJDM-RELATED"/>
    <property type="match status" value="1"/>
</dbReference>
<dbReference type="Pfam" id="PF07475">
    <property type="entry name" value="Hpr_kinase_C"/>
    <property type="match status" value="1"/>
</dbReference>
<dbReference type="Pfam" id="PF02603">
    <property type="entry name" value="Hpr_kinase_N"/>
    <property type="match status" value="1"/>
</dbReference>
<dbReference type="SUPFAM" id="SSF75138">
    <property type="entry name" value="HprK N-terminal domain-like"/>
    <property type="match status" value="1"/>
</dbReference>
<dbReference type="SUPFAM" id="SSF53795">
    <property type="entry name" value="PEP carboxykinase-like"/>
    <property type="match status" value="1"/>
</dbReference>
<feature type="chain" id="PRO_1000085790" description="HPr kinase/phosphorylase">
    <location>
        <begin position="1"/>
        <end position="309"/>
    </location>
</feature>
<feature type="region of interest" description="Important for the catalytic mechanism of both phosphorylation and dephosphorylation" evidence="1">
    <location>
        <begin position="201"/>
        <end position="210"/>
    </location>
</feature>
<feature type="region of interest" description="Important for the catalytic mechanism of dephosphorylation" evidence="1">
    <location>
        <begin position="264"/>
        <end position="269"/>
    </location>
</feature>
<feature type="active site" evidence="1">
    <location>
        <position position="138"/>
    </location>
</feature>
<feature type="active site" evidence="1">
    <location>
        <position position="159"/>
    </location>
</feature>
<feature type="active site" description="Proton acceptor; for phosphorylation activity. Proton donor; for dephosphorylation activity" evidence="1">
    <location>
        <position position="177"/>
    </location>
</feature>
<feature type="active site" evidence="1">
    <location>
        <position position="243"/>
    </location>
</feature>
<feature type="binding site" evidence="1">
    <location>
        <begin position="153"/>
        <end position="160"/>
    </location>
    <ligand>
        <name>ATP</name>
        <dbReference type="ChEBI" id="CHEBI:30616"/>
    </ligand>
</feature>
<feature type="binding site" evidence="1">
    <location>
        <position position="160"/>
    </location>
    <ligand>
        <name>Mg(2+)</name>
        <dbReference type="ChEBI" id="CHEBI:18420"/>
    </ligand>
</feature>
<feature type="binding site" evidence="1">
    <location>
        <position position="202"/>
    </location>
    <ligand>
        <name>Mg(2+)</name>
        <dbReference type="ChEBI" id="CHEBI:18420"/>
    </ligand>
</feature>
<name>HPRK_BACCN</name>
<keyword id="KW-0067">ATP-binding</keyword>
<keyword id="KW-0119">Carbohydrate metabolism</keyword>
<keyword id="KW-0418">Kinase</keyword>
<keyword id="KW-0460">Magnesium</keyword>
<keyword id="KW-0479">Metal-binding</keyword>
<keyword id="KW-0511">Multifunctional enzyme</keyword>
<keyword id="KW-0547">Nucleotide-binding</keyword>
<keyword id="KW-0723">Serine/threonine-protein kinase</keyword>
<keyword id="KW-0808">Transferase</keyword>
<proteinExistence type="inferred from homology"/>
<organism>
    <name type="scientific">Bacillus cytotoxicus (strain DSM 22905 / CIP 110041 / 391-98 / NVH 391-98)</name>
    <dbReference type="NCBI Taxonomy" id="315749"/>
    <lineage>
        <taxon>Bacteria</taxon>
        <taxon>Bacillati</taxon>
        <taxon>Bacillota</taxon>
        <taxon>Bacilli</taxon>
        <taxon>Bacillales</taxon>
        <taxon>Bacillaceae</taxon>
        <taxon>Bacillus</taxon>
        <taxon>Bacillus cereus group</taxon>
    </lineage>
</organism>
<accession>A7GUU5</accession>
<gene>
    <name evidence="1" type="primary">hprK</name>
    <name type="ordered locus">Bcer98_3706</name>
</gene>
<sequence length="309" mass="34535">MPKVRTKDLIEQFQLELVSGEEGIHRPIDTSDLSRPGIEMAGFFTYYPADRVQLLGKTELTFFDTLTNDQKQERMKALCTEETPCIIVTRNQDVPKELLQASRESGVPLLRSSQTTTRLSSRLTNYLEGKLAPTTAVHGVLVDVYGVGVLIIGQSGVGKSETALELVKRGHRLVADDSVEIRQEDEDTLVGSSPDLIEHLLEIRGLGIINVMTLFGAGAVRNYKRITLVINLEIWDQNKNYDRLGLDEEKMKIIDTELTKITLPVRPGRNLAVIIEVAAMNFRLKRMGVNAAQQFSERLMSAIELGNQE</sequence>
<reference key="1">
    <citation type="journal article" date="2008" name="Chem. Biol. Interact.">
        <title>Extending the Bacillus cereus group genomics to putative food-borne pathogens of different toxicity.</title>
        <authorList>
            <person name="Lapidus A."/>
            <person name="Goltsman E."/>
            <person name="Auger S."/>
            <person name="Galleron N."/>
            <person name="Segurens B."/>
            <person name="Dossat C."/>
            <person name="Land M.L."/>
            <person name="Broussolle V."/>
            <person name="Brillard J."/>
            <person name="Guinebretiere M.-H."/>
            <person name="Sanchis V."/>
            <person name="Nguen-the C."/>
            <person name="Lereclus D."/>
            <person name="Richardson P."/>
            <person name="Wincker P."/>
            <person name="Weissenbach J."/>
            <person name="Ehrlich S.D."/>
            <person name="Sorokin A."/>
        </authorList>
    </citation>
    <scope>NUCLEOTIDE SEQUENCE [LARGE SCALE GENOMIC DNA]</scope>
    <source>
        <strain>DSM 22905 / CIP 110041 / 391-98 / NVH 391-98</strain>
    </source>
</reference>